<dbReference type="EMBL" id="CP000607">
    <property type="protein sequence ID" value="ABP36480.1"/>
    <property type="molecule type" value="Genomic_DNA"/>
</dbReference>
<dbReference type="SMR" id="A4SDC1"/>
<dbReference type="STRING" id="290318.Cvib_0458"/>
<dbReference type="KEGG" id="pvi:Cvib_0458"/>
<dbReference type="eggNOG" id="COG0052">
    <property type="taxonomic scope" value="Bacteria"/>
</dbReference>
<dbReference type="HOGENOM" id="CLU_040318_1_2_10"/>
<dbReference type="OrthoDB" id="9808036at2"/>
<dbReference type="GO" id="GO:0022627">
    <property type="term" value="C:cytosolic small ribosomal subunit"/>
    <property type="evidence" value="ECO:0007669"/>
    <property type="project" value="TreeGrafter"/>
</dbReference>
<dbReference type="GO" id="GO:0003735">
    <property type="term" value="F:structural constituent of ribosome"/>
    <property type="evidence" value="ECO:0007669"/>
    <property type="project" value="InterPro"/>
</dbReference>
<dbReference type="GO" id="GO:0006412">
    <property type="term" value="P:translation"/>
    <property type="evidence" value="ECO:0007669"/>
    <property type="project" value="UniProtKB-UniRule"/>
</dbReference>
<dbReference type="CDD" id="cd01425">
    <property type="entry name" value="RPS2"/>
    <property type="match status" value="1"/>
</dbReference>
<dbReference type="FunFam" id="1.10.287.610:FF:000001">
    <property type="entry name" value="30S ribosomal protein S2"/>
    <property type="match status" value="1"/>
</dbReference>
<dbReference type="Gene3D" id="3.40.50.10490">
    <property type="entry name" value="Glucose-6-phosphate isomerase like protein, domain 1"/>
    <property type="match status" value="1"/>
</dbReference>
<dbReference type="Gene3D" id="1.10.287.610">
    <property type="entry name" value="Helix hairpin bin"/>
    <property type="match status" value="1"/>
</dbReference>
<dbReference type="HAMAP" id="MF_00291_B">
    <property type="entry name" value="Ribosomal_uS2_B"/>
    <property type="match status" value="1"/>
</dbReference>
<dbReference type="InterPro" id="IPR001865">
    <property type="entry name" value="Ribosomal_uS2"/>
</dbReference>
<dbReference type="InterPro" id="IPR005706">
    <property type="entry name" value="Ribosomal_uS2_bac/mit/plastid"/>
</dbReference>
<dbReference type="InterPro" id="IPR018130">
    <property type="entry name" value="Ribosomal_uS2_CS"/>
</dbReference>
<dbReference type="InterPro" id="IPR023591">
    <property type="entry name" value="Ribosomal_uS2_flav_dom_sf"/>
</dbReference>
<dbReference type="NCBIfam" id="TIGR01011">
    <property type="entry name" value="rpsB_bact"/>
    <property type="match status" value="1"/>
</dbReference>
<dbReference type="PANTHER" id="PTHR12534">
    <property type="entry name" value="30S RIBOSOMAL PROTEIN S2 PROKARYOTIC AND ORGANELLAR"/>
    <property type="match status" value="1"/>
</dbReference>
<dbReference type="PANTHER" id="PTHR12534:SF0">
    <property type="entry name" value="SMALL RIBOSOMAL SUBUNIT PROTEIN US2M"/>
    <property type="match status" value="1"/>
</dbReference>
<dbReference type="Pfam" id="PF00318">
    <property type="entry name" value="Ribosomal_S2"/>
    <property type="match status" value="1"/>
</dbReference>
<dbReference type="PRINTS" id="PR00395">
    <property type="entry name" value="RIBOSOMALS2"/>
</dbReference>
<dbReference type="SUPFAM" id="SSF52313">
    <property type="entry name" value="Ribosomal protein S2"/>
    <property type="match status" value="1"/>
</dbReference>
<dbReference type="PROSITE" id="PS00962">
    <property type="entry name" value="RIBOSOMAL_S2_1"/>
    <property type="match status" value="1"/>
</dbReference>
<dbReference type="PROSITE" id="PS00963">
    <property type="entry name" value="RIBOSOMAL_S2_2"/>
    <property type="match status" value="1"/>
</dbReference>
<gene>
    <name evidence="1" type="primary">rpsB</name>
    <name type="ordered locus">Cvib_0458</name>
</gene>
<sequence length="257" mass="28780">MSYFQLEDMLRAGVHFGHLARRWSPKMKPYIFMEKNGVHIIDLQKTLVLADNALNALDAIAQTGREIMFVGTKKQAKNIIAAEAERAGMPYVCERWLGGMLTNFSTIRQSIRRMNAIDRMETDGTYDMITKKERLMLGREREKLMRILGGIATMTRIPAALFIVDIKKEHIAIKEARSLGIPIFAMVDTNCDPDLVDYVIPANDDAIRSIQLMVKAVADTIVNARALKVEQEVLAKMDEADGSEAEPEDPAAPESAE</sequence>
<reference key="1">
    <citation type="submission" date="2007-03" db="EMBL/GenBank/DDBJ databases">
        <title>Complete sequence of Prosthecochloris vibrioformis DSM 265.</title>
        <authorList>
            <consortium name="US DOE Joint Genome Institute"/>
            <person name="Copeland A."/>
            <person name="Lucas S."/>
            <person name="Lapidus A."/>
            <person name="Barry K."/>
            <person name="Detter J.C."/>
            <person name="Glavina del Rio T."/>
            <person name="Hammon N."/>
            <person name="Israni S."/>
            <person name="Pitluck S."/>
            <person name="Schmutz J."/>
            <person name="Larimer F."/>
            <person name="Land M."/>
            <person name="Hauser L."/>
            <person name="Mikhailova N."/>
            <person name="Li T."/>
            <person name="Overmann J."/>
            <person name="Schuster S.C."/>
            <person name="Bryant D.A."/>
            <person name="Richardson P."/>
        </authorList>
    </citation>
    <scope>NUCLEOTIDE SEQUENCE [LARGE SCALE GENOMIC DNA]</scope>
    <source>
        <strain>DSM 265 / 1930</strain>
    </source>
</reference>
<organism>
    <name type="scientific">Chlorobium phaeovibrioides (strain DSM 265 / 1930)</name>
    <name type="common">Prosthecochloris vibrioformis (strain DSM 265)</name>
    <dbReference type="NCBI Taxonomy" id="290318"/>
    <lineage>
        <taxon>Bacteria</taxon>
        <taxon>Pseudomonadati</taxon>
        <taxon>Chlorobiota</taxon>
        <taxon>Chlorobiia</taxon>
        <taxon>Chlorobiales</taxon>
        <taxon>Chlorobiaceae</taxon>
        <taxon>Chlorobium/Pelodictyon group</taxon>
        <taxon>Chlorobium</taxon>
    </lineage>
</organism>
<accession>A4SDC1</accession>
<protein>
    <recommendedName>
        <fullName evidence="1">Small ribosomal subunit protein uS2</fullName>
    </recommendedName>
    <alternativeName>
        <fullName evidence="3">30S ribosomal protein S2</fullName>
    </alternativeName>
</protein>
<name>RS2_CHLPM</name>
<feature type="chain" id="PRO_1000078892" description="Small ribosomal subunit protein uS2">
    <location>
        <begin position="1"/>
        <end position="257"/>
    </location>
</feature>
<feature type="region of interest" description="Disordered" evidence="2">
    <location>
        <begin position="237"/>
        <end position="257"/>
    </location>
</feature>
<feature type="compositionally biased region" description="Acidic residues" evidence="2">
    <location>
        <begin position="240"/>
        <end position="257"/>
    </location>
</feature>
<keyword id="KW-0687">Ribonucleoprotein</keyword>
<keyword id="KW-0689">Ribosomal protein</keyword>
<comment type="similarity">
    <text evidence="1">Belongs to the universal ribosomal protein uS2 family.</text>
</comment>
<evidence type="ECO:0000255" key="1">
    <source>
        <dbReference type="HAMAP-Rule" id="MF_00291"/>
    </source>
</evidence>
<evidence type="ECO:0000256" key="2">
    <source>
        <dbReference type="SAM" id="MobiDB-lite"/>
    </source>
</evidence>
<evidence type="ECO:0000305" key="3"/>
<proteinExistence type="inferred from homology"/>